<keyword id="KW-0025">Alternative splicing</keyword>
<keyword id="KW-1035">Host cytoplasm</keyword>
<keyword id="KW-1045">Host mitochondrion</keyword>
<keyword id="KW-1185">Reference proteome</keyword>
<proteinExistence type="inferred from homology"/>
<accession>P0DOG6</accession>
<protein>
    <recommendedName>
        <fullName>PB2-S1</fullName>
    </recommendedName>
</protein>
<comment type="function">
    <text evidence="2">May participate in the inhibition of type I interferon induction through inhibition of the host mitochondrial antiviral signaling protein MAVS. The knockout of PB2-S1 has no detectable effects on laboratory infected mice.</text>
</comment>
<comment type="subcellular location">
    <subcellularLocation>
        <location evidence="2">Host mitochondrion</location>
    </subcellularLocation>
    <subcellularLocation>
        <location evidence="2">Host cytoplasm</location>
        <location evidence="2">Host cytosol</location>
    </subcellularLocation>
</comment>
<comment type="alternative products">
    <event type="alternative splicing"/>
    <isoform>
        <id>P0DOG6-1</id>
        <name evidence="1">PB2-S1</name>
        <sequence type="displayed"/>
    </isoform>
    <isoform>
        <id>P03428-1</id>
        <name>Polymerase basic protein 2</name>
        <sequence type="external"/>
    </isoform>
</comment>
<organismHost>
    <name type="scientific">Aves</name>
    <dbReference type="NCBI Taxonomy" id="8782"/>
</organismHost>
<organismHost>
    <name type="scientific">Homo sapiens</name>
    <name type="common">Human</name>
    <dbReference type="NCBI Taxonomy" id="9606"/>
</organismHost>
<organismHost>
    <name type="scientific">Sus scrofa</name>
    <name type="common">Pig</name>
    <dbReference type="NCBI Taxonomy" id="9823"/>
</organismHost>
<sequence length="510" mass="58096">MERIKELRNLMSQSRTREILTKTTVDHMAIIKKYTSGRQEKNPALRMKWMMAMKYPITADKRITEMIPERNEQGQTLWSKMNDAGSDRVMVSPLAVTWWNRNGPITNTVHYPKIYKTYFERVERLKHGTFGPVHFRNQVKIRRRVDINPGHADLSAKEAQDVIMEVVFPNEVGARILTSESQLTITKEKKEELQDCKISPLMVAYMLERELVRKTRFLPVAGGTSSVYIEVLHLTQGTCWEQMYTPGGEVRNDDVDQSLIIAARNIVRRAAVSADPLASLLEMCHSTQIGGIRMVDILRQNPTEEQAVDICKAAMGLRISSSFSFGGFTFKRTSGSSVKREEEVLTGNLQTLKIRVHEGYEEFTMVGRRATAILRKATRRLIQLIVSGRDEQSIAEAIIVAMVFSQEDCMIKAVRGDLNFVNRANQRLNPMHQLLRHFQKDAKVLFQNWGVEPIDNVMGMIGILPDMTPSIEMSMRGVRISKMGVDEYSSTERVVPLHQSKVECSSPHLL</sequence>
<dbReference type="EMBL" id="V00603">
    <property type="status" value="NOT_ANNOTATED_CDS"/>
    <property type="molecule type" value="Unassigned_RNA"/>
</dbReference>
<dbReference type="EMBL" id="AF389115">
    <property type="status" value="NOT_ANNOTATED_CDS"/>
    <property type="molecule type" value="Genomic_RNA"/>
</dbReference>
<dbReference type="EMBL" id="EF467818">
    <property type="status" value="NOT_ANNOTATED_CDS"/>
    <property type="molecule type" value="Genomic_RNA"/>
</dbReference>
<dbReference type="EMBL" id="CY009451">
    <property type="status" value="NOT_ANNOTATED_CDS"/>
    <property type="molecule type" value="Genomic_RNA"/>
</dbReference>
<dbReference type="SMR" id="P0DOG6"/>
<dbReference type="Proteomes" id="UP000009255">
    <property type="component" value="Genome"/>
</dbReference>
<dbReference type="Proteomes" id="UP000116373">
    <property type="component" value="Genome"/>
</dbReference>
<dbReference type="Proteomes" id="UP000170967">
    <property type="component" value="Genome"/>
</dbReference>
<dbReference type="GO" id="GO:0044164">
    <property type="term" value="C:host cell cytosol"/>
    <property type="evidence" value="ECO:0007669"/>
    <property type="project" value="UniProtKB-SubCell"/>
</dbReference>
<dbReference type="GO" id="GO:0033650">
    <property type="term" value="C:host cell mitochondrion"/>
    <property type="evidence" value="ECO:0007669"/>
    <property type="project" value="UniProtKB-SubCell"/>
</dbReference>
<dbReference type="InterPro" id="IPR049110">
    <property type="entry name" value="Flu_PB2_2nd"/>
</dbReference>
<dbReference type="InterPro" id="IPR048298">
    <property type="entry name" value="Flu_PB2_CAP-bd"/>
</dbReference>
<dbReference type="InterPro" id="IPR049111">
    <property type="entry name" value="Flu_PB2_middle"/>
</dbReference>
<dbReference type="InterPro" id="IPR049106">
    <property type="entry name" value="Flu_PB2_N"/>
</dbReference>
<dbReference type="InterPro" id="IPR049113">
    <property type="entry name" value="PB2_helical"/>
</dbReference>
<dbReference type="Pfam" id="PF20947">
    <property type="entry name" value="Flu_PB2_1st"/>
    <property type="match status" value="1"/>
</dbReference>
<dbReference type="Pfam" id="PF20948">
    <property type="entry name" value="Flu_PB2_2nd"/>
    <property type="match status" value="1"/>
</dbReference>
<dbReference type="Pfam" id="PF20949">
    <property type="entry name" value="Flu_PB2_3rd"/>
    <property type="match status" value="1"/>
</dbReference>
<dbReference type="Pfam" id="PF20950">
    <property type="entry name" value="Flu_PB2_4th"/>
    <property type="match status" value="1"/>
</dbReference>
<dbReference type="Pfam" id="PF00604">
    <property type="entry name" value="Flu_PB2_5th"/>
    <property type="match status" value="1"/>
</dbReference>
<reference key="1">
    <citation type="journal article" date="1982" name="Cell">
        <title>Nucleotide sequences of influenza virus segments 1 and 3 reveal mosaic structure of a small viral RNA segment.</title>
        <authorList>
            <person name="Fields S."/>
            <person name="Winter G."/>
        </authorList>
    </citation>
    <scope>NUCLEOTIDE SEQUENCE [GENOMIC RNA]</scope>
</reference>
<reference key="2">
    <citation type="journal article" date="2001" name="Philos. Trans. R. Soc. Lond., B, Biol. Sci.">
        <title>Plasmid-only rescue of influenza A virus vaccine candidates.</title>
        <authorList>
            <person name="Schickli J.H."/>
            <person name="Flandorfer A."/>
            <person name="Nakaya T."/>
            <person name="Martinez-Sobrido L."/>
            <person name="Garcia-Sastre A."/>
            <person name="Palese P."/>
        </authorList>
    </citation>
    <scope>NUCLEOTIDE SEQUENCE [GENOMIC RNA]</scope>
</reference>
<reference key="3">
    <citation type="journal article" date="2004" name="Virus Res.">
        <title>Efficient generation and growth of influenza virus A/PR/8/34 from eight cDNA fragments.</title>
        <authorList>
            <person name="de Wit E."/>
            <person name="Spronken M.I.J."/>
            <person name="Bestebroer T.M."/>
            <person name="Rimmelzwaan G.F."/>
            <person name="Osterhaus A.D.M.E."/>
            <person name="Fouchier R.A.M."/>
        </authorList>
    </citation>
    <scope>NUCLEOTIDE SEQUENCE [GENOMIC RNA]</scope>
</reference>
<reference key="4">
    <citation type="submission" date="2006-03" db="EMBL/GenBank/DDBJ databases">
        <title>The NIAID influenza genome sequencing project.</title>
        <authorList>
            <person name="Ghedin E."/>
            <person name="Spiro D."/>
            <person name="Miller N."/>
            <person name="Zaborsky J."/>
            <person name="Feldblyum T."/>
            <person name="Subbu V."/>
            <person name="Shumway M."/>
            <person name="Sparenborg J."/>
            <person name="Groveman L."/>
            <person name="Halpin R."/>
            <person name="Sitz J."/>
            <person name="Koo H."/>
            <person name="Salzberg S.L."/>
            <person name="Webster R.G."/>
            <person name="Hoffmann E."/>
            <person name="Krauss S."/>
            <person name="Naeve C."/>
            <person name="Bao Y."/>
            <person name="Bolotov P."/>
            <person name="Dernovoy D."/>
            <person name="Kiryutin B."/>
            <person name="Lipman D.J."/>
            <person name="Tatusova T."/>
        </authorList>
    </citation>
    <scope>NUCLEOTIDE SEQUENCE [GENOMIC RNA]</scope>
</reference>
<gene>
    <name type="primary">PB2</name>
</gene>
<name>PB2S1_I34A1</name>
<organism>
    <name type="scientific">Influenza A virus (strain A/Puerto Rico/8/1934 H1N1)</name>
    <dbReference type="NCBI Taxonomy" id="211044"/>
    <lineage>
        <taxon>Viruses</taxon>
        <taxon>Riboviria</taxon>
        <taxon>Orthornavirae</taxon>
        <taxon>Negarnaviricota</taxon>
        <taxon>Polyploviricotina</taxon>
        <taxon>Insthoviricetes</taxon>
        <taxon>Articulavirales</taxon>
        <taxon>Orthomyxoviridae</taxon>
        <taxon>Alphainfluenzavirus</taxon>
        <taxon>Alphainfluenzavirus influenzae</taxon>
        <taxon>Influenza A virus</taxon>
    </lineage>
</organism>
<feature type="chain" id="PRO_0000440604" description="PB2-S1">
    <location>
        <begin position="1"/>
        <end position="510"/>
    </location>
</feature>
<evidence type="ECO:0000250" key="1">
    <source>
        <dbReference type="UniProtKB" id="P03427"/>
    </source>
</evidence>
<evidence type="ECO:0000250" key="2">
    <source>
        <dbReference type="UniProtKB" id="P0DOG3"/>
    </source>
</evidence>